<evidence type="ECO:0000255" key="1">
    <source>
        <dbReference type="HAMAP-Rule" id="MF_01275"/>
    </source>
</evidence>
<reference key="1">
    <citation type="submission" date="2007-11" db="EMBL/GenBank/DDBJ databases">
        <authorList>
            <consortium name="The Salmonella enterica serovar Arizonae Genome Sequencing Project"/>
            <person name="McClelland M."/>
            <person name="Sanderson E.K."/>
            <person name="Porwollik S."/>
            <person name="Spieth J."/>
            <person name="Clifton W.S."/>
            <person name="Fulton R."/>
            <person name="Chunyan W."/>
            <person name="Wollam A."/>
            <person name="Shah N."/>
            <person name="Pepin K."/>
            <person name="Bhonagiri V."/>
            <person name="Nash W."/>
            <person name="Johnson M."/>
            <person name="Thiruvilangam P."/>
            <person name="Wilson R."/>
        </authorList>
    </citation>
    <scope>NUCLEOTIDE SEQUENCE [LARGE SCALE GENOMIC DNA]</scope>
    <source>
        <strain>ATCC BAA-731 / CDC346-86 / RSK2980</strain>
    </source>
</reference>
<gene>
    <name evidence="1" type="primary">patD</name>
    <name type="ordered locus">SARI_01380</name>
</gene>
<name>ABDH_SALAR</name>
<accession>A9MQY3</accession>
<sequence length="474" mass="51121">MQYQLLINGALVNGEGERQSVYNPATGEVILEIAEASPKQVDAAVLAADNAFTAWGQTTPKVRAECLLELADSIKQNALQLAKLESQNCGKPLHCVINDEIPAIIDVFRFFAGAARCLNGLAAGEYLEGYTSMIRRDPVGVVASIAPWNYPLMMAAWKLAPALAAGNCVVIKPSEITPLTALKLAALAKDIFPPGVINVLFGRGQTVGDALTGHEKVRMVSLTGSIATGEHILRHTAPAIKRTHMELGGKAPVIVFNDADLDAVAQGIRTFGFYNAGQDCTAACRIYAQRGIYDTLVEKLGQAVSSLKMGAPEDESTELGPLSSQAHLARVTAAVEEAKALSHIRVIAGGRQTGGKGYYFAPTLLADAKQEDAIVQREVFGPVVSITAFDDEEQVLRWANESRYGLASSVWTQDVGRAHRLSARLQYGCTWVNTHFMLVSEMPHGGQKQSGYGKDMSLYGLEDYTLVRHIMIKH</sequence>
<protein>
    <recommendedName>
        <fullName evidence="1">Gamma-aminobutyraldehyde dehydrogenase</fullName>
        <shortName evidence="1">ABALDH</shortName>
        <ecNumber evidence="1">1.2.1.19</ecNumber>
    </recommendedName>
    <alternativeName>
        <fullName evidence="1">1-pyrroline dehydrogenase</fullName>
    </alternativeName>
    <alternativeName>
        <fullName evidence="1">4-aminobutanal dehydrogenase</fullName>
    </alternativeName>
    <alternativeName>
        <fullName evidence="1">5-aminopentanal dehydrogenase</fullName>
        <ecNumber evidence="1">1.2.1.-</ecNumber>
    </alternativeName>
</protein>
<proteinExistence type="inferred from homology"/>
<dbReference type="EC" id="1.2.1.19" evidence="1"/>
<dbReference type="EC" id="1.2.1.-" evidence="1"/>
<dbReference type="EMBL" id="CP000880">
    <property type="protein sequence ID" value="ABX21278.1"/>
    <property type="molecule type" value="Genomic_DNA"/>
</dbReference>
<dbReference type="SMR" id="A9MQY3"/>
<dbReference type="STRING" id="41514.SARI_01380"/>
<dbReference type="KEGG" id="ses:SARI_01380"/>
<dbReference type="HOGENOM" id="CLU_005391_0_0_6"/>
<dbReference type="UniPathway" id="UPA00188">
    <property type="reaction ID" value="UER00292"/>
</dbReference>
<dbReference type="Proteomes" id="UP000002084">
    <property type="component" value="Chromosome"/>
</dbReference>
<dbReference type="GO" id="GO:0019145">
    <property type="term" value="F:aminobutyraldehyde dehydrogenase (NAD+) activity"/>
    <property type="evidence" value="ECO:0007669"/>
    <property type="project" value="UniProtKB-UniRule"/>
</dbReference>
<dbReference type="GO" id="GO:0051287">
    <property type="term" value="F:NAD binding"/>
    <property type="evidence" value="ECO:0007669"/>
    <property type="project" value="UniProtKB-UniRule"/>
</dbReference>
<dbReference type="GO" id="GO:0019477">
    <property type="term" value="P:L-lysine catabolic process"/>
    <property type="evidence" value="ECO:0007669"/>
    <property type="project" value="UniProtKB-UniRule"/>
</dbReference>
<dbReference type="GO" id="GO:0009447">
    <property type="term" value="P:putrescine catabolic process"/>
    <property type="evidence" value="ECO:0007669"/>
    <property type="project" value="UniProtKB-UniRule"/>
</dbReference>
<dbReference type="CDD" id="cd07092">
    <property type="entry name" value="ALDH_ABALDH-YdcW"/>
    <property type="match status" value="1"/>
</dbReference>
<dbReference type="FunFam" id="3.40.605.10:FF:000001">
    <property type="entry name" value="Aldehyde dehydrogenase 1"/>
    <property type="match status" value="1"/>
</dbReference>
<dbReference type="FunFam" id="3.40.309.10:FF:000010">
    <property type="entry name" value="Gamma-aminobutyraldehyde dehydrogenase"/>
    <property type="match status" value="1"/>
</dbReference>
<dbReference type="Gene3D" id="3.40.605.10">
    <property type="entry name" value="Aldehyde Dehydrogenase, Chain A, domain 1"/>
    <property type="match status" value="1"/>
</dbReference>
<dbReference type="Gene3D" id="3.40.309.10">
    <property type="entry name" value="Aldehyde Dehydrogenase, Chain A, domain 2"/>
    <property type="match status" value="1"/>
</dbReference>
<dbReference type="HAMAP" id="MF_01275">
    <property type="entry name" value="Aldedh_Prr"/>
    <property type="match status" value="1"/>
</dbReference>
<dbReference type="InterPro" id="IPR016161">
    <property type="entry name" value="Ald_DH/histidinol_DH"/>
</dbReference>
<dbReference type="InterPro" id="IPR016163">
    <property type="entry name" value="Ald_DH_C"/>
</dbReference>
<dbReference type="InterPro" id="IPR029510">
    <property type="entry name" value="Ald_DH_CS_GLU"/>
</dbReference>
<dbReference type="InterPro" id="IPR016162">
    <property type="entry name" value="Ald_DH_N"/>
</dbReference>
<dbReference type="InterPro" id="IPR015590">
    <property type="entry name" value="Aldehyde_DH_dom"/>
</dbReference>
<dbReference type="InterPro" id="IPR015657">
    <property type="entry name" value="Aminobutyraldehyde_DH"/>
</dbReference>
<dbReference type="InterPro" id="IPR017749">
    <property type="entry name" value="PatD"/>
</dbReference>
<dbReference type="NCBIfam" id="TIGR03374">
    <property type="entry name" value="ABALDH"/>
    <property type="match status" value="1"/>
</dbReference>
<dbReference type="NCBIfam" id="NF010000">
    <property type="entry name" value="PRK13473.1"/>
    <property type="match status" value="1"/>
</dbReference>
<dbReference type="PANTHER" id="PTHR11699">
    <property type="entry name" value="ALDEHYDE DEHYDROGENASE-RELATED"/>
    <property type="match status" value="1"/>
</dbReference>
<dbReference type="Pfam" id="PF00171">
    <property type="entry name" value="Aldedh"/>
    <property type="match status" value="1"/>
</dbReference>
<dbReference type="SUPFAM" id="SSF53720">
    <property type="entry name" value="ALDH-like"/>
    <property type="match status" value="1"/>
</dbReference>
<dbReference type="PROSITE" id="PS00687">
    <property type="entry name" value="ALDEHYDE_DEHYDR_GLU"/>
    <property type="match status" value="1"/>
</dbReference>
<feature type="chain" id="PRO_1000085862" description="Gamma-aminobutyraldehyde dehydrogenase">
    <location>
        <begin position="1"/>
        <end position="474"/>
    </location>
</feature>
<feature type="active site" evidence="1">
    <location>
        <position position="246"/>
    </location>
</feature>
<feature type="active site" description="Nucleophile" evidence="1">
    <location>
        <position position="280"/>
    </location>
</feature>
<feature type="binding site" evidence="1">
    <location>
        <begin position="146"/>
        <end position="148"/>
    </location>
    <ligand>
        <name>NAD(+)</name>
        <dbReference type="ChEBI" id="CHEBI:57540"/>
    </ligand>
</feature>
<feature type="binding site" evidence="1">
    <location>
        <begin position="172"/>
        <end position="175"/>
    </location>
    <ligand>
        <name>NAD(+)</name>
        <dbReference type="ChEBI" id="CHEBI:57540"/>
    </ligand>
</feature>
<feature type="binding site" evidence="1">
    <location>
        <position position="209"/>
    </location>
    <ligand>
        <name>NAD(+)</name>
        <dbReference type="ChEBI" id="CHEBI:57540"/>
    </ligand>
</feature>
<feature type="binding site" evidence="1">
    <location>
        <begin position="225"/>
        <end position="228"/>
    </location>
    <ligand>
        <name>NAD(+)</name>
        <dbReference type="ChEBI" id="CHEBI:57540"/>
    </ligand>
</feature>
<feature type="binding site" evidence="1">
    <location>
        <position position="280"/>
    </location>
    <ligand>
        <name>NAD(+)</name>
        <dbReference type="ChEBI" id="CHEBI:57540"/>
    </ligand>
</feature>
<organism>
    <name type="scientific">Salmonella arizonae (strain ATCC BAA-731 / CDC346-86 / RSK2980)</name>
    <dbReference type="NCBI Taxonomy" id="41514"/>
    <lineage>
        <taxon>Bacteria</taxon>
        <taxon>Pseudomonadati</taxon>
        <taxon>Pseudomonadota</taxon>
        <taxon>Gammaproteobacteria</taxon>
        <taxon>Enterobacterales</taxon>
        <taxon>Enterobacteriaceae</taxon>
        <taxon>Salmonella</taxon>
    </lineage>
</organism>
<comment type="function">
    <text evidence="1">Catalyzes the oxidation 4-aminobutanal (gamma-aminobutyraldehyde) to 4-aminobutanoate (gamma-aminobutyrate or GABA). This is the second step in one of two pathways for putrescine degradation, where putrescine is converted into 4-aminobutanoate via 4-aminobutanal. Also functions as a 5-aminopentanal dehydrogenase in a a L-lysine degradation pathway to succinate that proceeds via cadaverine, glutarate and L-2-hydroxyglutarate.</text>
</comment>
<comment type="catalytic activity">
    <reaction evidence="1">
        <text>4-aminobutanal + NAD(+) + H2O = 4-aminobutanoate + NADH + 2 H(+)</text>
        <dbReference type="Rhea" id="RHEA:19105"/>
        <dbReference type="ChEBI" id="CHEBI:15377"/>
        <dbReference type="ChEBI" id="CHEBI:15378"/>
        <dbReference type="ChEBI" id="CHEBI:57540"/>
        <dbReference type="ChEBI" id="CHEBI:57945"/>
        <dbReference type="ChEBI" id="CHEBI:58264"/>
        <dbReference type="ChEBI" id="CHEBI:59888"/>
        <dbReference type="EC" id="1.2.1.19"/>
    </reaction>
    <physiologicalReaction direction="left-to-right" evidence="1">
        <dbReference type="Rhea" id="RHEA:19106"/>
    </physiologicalReaction>
</comment>
<comment type="catalytic activity">
    <reaction evidence="1">
        <text>5-aminopentanal + NAD(+) + H2O = 5-aminopentanoate + NADH + 2 H(+)</text>
        <dbReference type="Rhea" id="RHEA:61632"/>
        <dbReference type="ChEBI" id="CHEBI:15377"/>
        <dbReference type="ChEBI" id="CHEBI:15378"/>
        <dbReference type="ChEBI" id="CHEBI:57540"/>
        <dbReference type="ChEBI" id="CHEBI:57945"/>
        <dbReference type="ChEBI" id="CHEBI:144896"/>
        <dbReference type="ChEBI" id="CHEBI:356010"/>
    </reaction>
    <physiologicalReaction direction="left-to-right" evidence="1">
        <dbReference type="Rhea" id="RHEA:61633"/>
    </physiologicalReaction>
</comment>
<comment type="pathway">
    <text evidence="1">Amine and polyamine degradation; putrescine degradation; 4-aminobutanoate from 4-aminobutanal: step 1/1.</text>
</comment>
<comment type="pathway">
    <text evidence="1">Amino-acid degradation.</text>
</comment>
<comment type="subunit">
    <text evidence="1">Homotetramer.</text>
</comment>
<comment type="miscellaneous">
    <text evidence="1">4-aminobutanal can spontaneously cyclize to 1-pyrroline, and 5-aminopentanal to 1-piperideine.</text>
</comment>
<comment type="similarity">
    <text evidence="1">Belongs to the aldehyde dehydrogenase family. Gamma-aminobutyraldehyde dehydrogenase subfamily.</text>
</comment>
<keyword id="KW-0520">NAD</keyword>
<keyword id="KW-0560">Oxidoreductase</keyword>
<keyword id="KW-1185">Reference proteome</keyword>